<accession>Q7V2L4</accession>
<comment type="function">
    <text evidence="1">Component of the cytochrome b6-f complex, which mediates electron transfer between photosystem II (PSII) and photosystem I (PSI), cyclic electron flow around PSI, and state transitions.</text>
</comment>
<comment type="catalytic activity">
    <reaction evidence="1">
        <text>2 oxidized [plastocyanin] + a plastoquinol + 2 H(+)(in) = 2 reduced [plastocyanin] + a plastoquinone + 4 H(+)(out)</text>
        <dbReference type="Rhea" id="RHEA:22148"/>
        <dbReference type="Rhea" id="RHEA-COMP:9561"/>
        <dbReference type="Rhea" id="RHEA-COMP:9562"/>
        <dbReference type="Rhea" id="RHEA-COMP:10039"/>
        <dbReference type="Rhea" id="RHEA-COMP:10040"/>
        <dbReference type="ChEBI" id="CHEBI:15378"/>
        <dbReference type="ChEBI" id="CHEBI:17757"/>
        <dbReference type="ChEBI" id="CHEBI:29036"/>
        <dbReference type="ChEBI" id="CHEBI:49552"/>
        <dbReference type="ChEBI" id="CHEBI:62192"/>
        <dbReference type="EC" id="7.1.1.6"/>
    </reaction>
</comment>
<comment type="cofactor">
    <cofactor evidence="1">
        <name>[2Fe-2S] cluster</name>
        <dbReference type="ChEBI" id="CHEBI:190135"/>
    </cofactor>
    <text evidence="1">Binds 1 [2Fe-2S] cluster per subunit.</text>
</comment>
<comment type="subunit">
    <text evidence="1">The 4 large subunits of the cytochrome b6-f complex are cytochrome b6, subunit IV (17 kDa polypeptide, PetD), cytochrome f and the Rieske protein, while the 4 small subunits are PetG, PetL, PetM and PetN. The complex functions as a dimer.</text>
</comment>
<comment type="subcellular location">
    <subcellularLocation>
        <location evidence="1">Cellular thylakoid membrane</location>
        <topology evidence="1">Single-pass membrane protein</topology>
    </subcellularLocation>
    <text evidence="1">The transmembrane helix obliquely spans the membrane in one monomer, and its extrinsic C-terminal domain is part of the other monomer.</text>
</comment>
<comment type="miscellaneous">
    <text>The Rieske iron-sulfur protein is a high potential 2Fe-2S protein.</text>
</comment>
<comment type="similarity">
    <text evidence="1">Belongs to the Rieske iron-sulfur protein family.</text>
</comment>
<feature type="chain" id="PRO_0000127779" description="Cytochrome b6-f complex iron-sulfur subunit">
    <location>
        <begin position="1"/>
        <end position="178"/>
    </location>
</feature>
<feature type="transmembrane region" description="Helical" evidence="1">
    <location>
        <begin position="20"/>
        <end position="42"/>
    </location>
</feature>
<feature type="domain" description="Rieske" evidence="1">
    <location>
        <begin position="65"/>
        <end position="161"/>
    </location>
</feature>
<feature type="binding site" evidence="1">
    <location>
        <position position="107"/>
    </location>
    <ligand>
        <name>[2Fe-2S] cluster</name>
        <dbReference type="ChEBI" id="CHEBI:190135"/>
    </ligand>
</feature>
<feature type="binding site" evidence="1">
    <location>
        <position position="109"/>
    </location>
    <ligand>
        <name>[2Fe-2S] cluster</name>
        <dbReference type="ChEBI" id="CHEBI:190135"/>
    </ligand>
</feature>
<feature type="binding site" evidence="1">
    <location>
        <position position="125"/>
    </location>
    <ligand>
        <name>[2Fe-2S] cluster</name>
        <dbReference type="ChEBI" id="CHEBI:190135"/>
    </ligand>
</feature>
<feature type="binding site" evidence="1">
    <location>
        <position position="128"/>
    </location>
    <ligand>
        <name>[2Fe-2S] cluster</name>
        <dbReference type="ChEBI" id="CHEBI:190135"/>
    </ligand>
</feature>
<feature type="disulfide bond" evidence="1">
    <location>
        <begin position="112"/>
        <end position="127"/>
    </location>
</feature>
<name>UCRI_PROMP</name>
<proteinExistence type="inferred from homology"/>
<keyword id="KW-0001">2Fe-2S</keyword>
<keyword id="KW-1015">Disulfide bond</keyword>
<keyword id="KW-0249">Electron transport</keyword>
<keyword id="KW-0408">Iron</keyword>
<keyword id="KW-0411">Iron-sulfur</keyword>
<keyword id="KW-0472">Membrane</keyword>
<keyword id="KW-0479">Metal-binding</keyword>
<keyword id="KW-0793">Thylakoid</keyword>
<keyword id="KW-1278">Translocase</keyword>
<keyword id="KW-0812">Transmembrane</keyword>
<keyword id="KW-1133">Transmembrane helix</keyword>
<keyword id="KW-0813">Transport</keyword>
<protein>
    <recommendedName>
        <fullName evidence="1">Cytochrome b6-f complex iron-sulfur subunit</fullName>
        <ecNumber evidence="1">7.1.1.6</ecNumber>
    </recommendedName>
    <alternativeName>
        <fullName evidence="1">Plastohydroquinone:plastocyanin oxidoreductase iron-sulfur protein</fullName>
        <shortName evidence="1">ISP</shortName>
        <shortName evidence="1">RISP</shortName>
    </alternativeName>
    <alternativeName>
        <fullName evidence="1">Rieske iron-sulfur protein</fullName>
    </alternativeName>
</protein>
<evidence type="ECO:0000255" key="1">
    <source>
        <dbReference type="HAMAP-Rule" id="MF_01335"/>
    </source>
</evidence>
<sequence>MTQLSSNDVPSMGRRQFMNLLTFGTATGVALGALYPVANYFMPLRAGGGGGGTSAKDELGNPVTKTGWLASHQAGDRSLVQGLKGDPTYLIVNSEGEIGEFGLNAICTHLGCVVPWDSGANKFICPCHGSQYDTNGKVVRGPAPLSLALAHVDVDDDAVLVKQWSETDFRTNENPWWA</sequence>
<organism>
    <name type="scientific">Prochlorococcus marinus subsp. pastoris (strain CCMP1986 / NIES-2087 / MED4)</name>
    <dbReference type="NCBI Taxonomy" id="59919"/>
    <lineage>
        <taxon>Bacteria</taxon>
        <taxon>Bacillati</taxon>
        <taxon>Cyanobacteriota</taxon>
        <taxon>Cyanophyceae</taxon>
        <taxon>Synechococcales</taxon>
        <taxon>Prochlorococcaceae</taxon>
        <taxon>Prochlorococcus</taxon>
    </lineage>
</organism>
<gene>
    <name evidence="1" type="primary">petC</name>
    <name type="ordered locus">PMM0462</name>
</gene>
<reference key="1">
    <citation type="journal article" date="2003" name="Nature">
        <title>Genome divergence in two Prochlorococcus ecotypes reflects oceanic niche differentiation.</title>
        <authorList>
            <person name="Rocap G."/>
            <person name="Larimer F.W."/>
            <person name="Lamerdin J.E."/>
            <person name="Malfatti S."/>
            <person name="Chain P."/>
            <person name="Ahlgren N.A."/>
            <person name="Arellano A."/>
            <person name="Coleman M."/>
            <person name="Hauser L."/>
            <person name="Hess W.R."/>
            <person name="Johnson Z.I."/>
            <person name="Land M.L."/>
            <person name="Lindell D."/>
            <person name="Post A.F."/>
            <person name="Regala W."/>
            <person name="Shah M."/>
            <person name="Shaw S.L."/>
            <person name="Steglich C."/>
            <person name="Sullivan M.B."/>
            <person name="Ting C.S."/>
            <person name="Tolonen A."/>
            <person name="Webb E.A."/>
            <person name="Zinser E.R."/>
            <person name="Chisholm S.W."/>
        </authorList>
    </citation>
    <scope>NUCLEOTIDE SEQUENCE [LARGE SCALE GENOMIC DNA]</scope>
    <source>
        <strain>CCMP1986 / NIES-2087 / MED4</strain>
    </source>
</reference>
<dbReference type="EC" id="7.1.1.6" evidence="1"/>
<dbReference type="EMBL" id="BX548174">
    <property type="protein sequence ID" value="CAE18921.1"/>
    <property type="molecule type" value="Genomic_DNA"/>
</dbReference>
<dbReference type="RefSeq" id="WP_011132098.1">
    <property type="nucleotide sequence ID" value="NC_005072.1"/>
</dbReference>
<dbReference type="SMR" id="Q7V2L4"/>
<dbReference type="STRING" id="59919.PMM0462"/>
<dbReference type="KEGG" id="pmm:PMM0462"/>
<dbReference type="eggNOG" id="COG0723">
    <property type="taxonomic scope" value="Bacteria"/>
</dbReference>
<dbReference type="HOGENOM" id="CLU_055690_8_0_3"/>
<dbReference type="OrthoDB" id="9767869at2"/>
<dbReference type="Proteomes" id="UP000001026">
    <property type="component" value="Chromosome"/>
</dbReference>
<dbReference type="GO" id="GO:0031676">
    <property type="term" value="C:plasma membrane-derived thylakoid membrane"/>
    <property type="evidence" value="ECO:0007669"/>
    <property type="project" value="UniProtKB-SubCell"/>
</dbReference>
<dbReference type="GO" id="GO:0051537">
    <property type="term" value="F:2 iron, 2 sulfur cluster binding"/>
    <property type="evidence" value="ECO:0007669"/>
    <property type="project" value="UniProtKB-KW"/>
</dbReference>
<dbReference type="GO" id="GO:0045158">
    <property type="term" value="F:electron transporter, transferring electrons within cytochrome b6/f complex of photosystem II activity"/>
    <property type="evidence" value="ECO:0007669"/>
    <property type="project" value="UniProtKB-UniRule"/>
</dbReference>
<dbReference type="GO" id="GO:0046872">
    <property type="term" value="F:metal ion binding"/>
    <property type="evidence" value="ECO:0007669"/>
    <property type="project" value="UniProtKB-KW"/>
</dbReference>
<dbReference type="GO" id="GO:0004497">
    <property type="term" value="F:monooxygenase activity"/>
    <property type="evidence" value="ECO:0007669"/>
    <property type="project" value="UniProtKB-ARBA"/>
</dbReference>
<dbReference type="GO" id="GO:0016705">
    <property type="term" value="F:oxidoreductase activity, acting on paired donors, with incorporation or reduction of molecular oxygen"/>
    <property type="evidence" value="ECO:0007669"/>
    <property type="project" value="UniProtKB-ARBA"/>
</dbReference>
<dbReference type="GO" id="GO:0009496">
    <property type="term" value="F:plastoquinol--plastocyanin reductase activity"/>
    <property type="evidence" value="ECO:0007669"/>
    <property type="project" value="UniProtKB-UniRule"/>
</dbReference>
<dbReference type="GO" id="GO:0015979">
    <property type="term" value="P:photosynthesis"/>
    <property type="evidence" value="ECO:0007669"/>
    <property type="project" value="UniProtKB-UniRule"/>
</dbReference>
<dbReference type="CDD" id="cd03471">
    <property type="entry name" value="Rieske_cytochrome_b6f"/>
    <property type="match status" value="1"/>
</dbReference>
<dbReference type="FunFam" id="2.102.10.10:FF:000007">
    <property type="entry name" value="Cytochrome b6-f complex iron-sulfur subunit"/>
    <property type="match status" value="1"/>
</dbReference>
<dbReference type="Gene3D" id="2.102.10.10">
    <property type="entry name" value="Rieske [2Fe-2S] iron-sulphur domain"/>
    <property type="match status" value="1"/>
</dbReference>
<dbReference type="Gene3D" id="1.20.5.700">
    <property type="entry name" value="Single helix bin"/>
    <property type="match status" value="1"/>
</dbReference>
<dbReference type="HAMAP" id="MF_01335">
    <property type="entry name" value="Cytb6_f_Rieske"/>
    <property type="match status" value="1"/>
</dbReference>
<dbReference type="InterPro" id="IPR023960">
    <property type="entry name" value="Cyt_b6_f_Rieske"/>
</dbReference>
<dbReference type="InterPro" id="IPR017941">
    <property type="entry name" value="Rieske_2Fe-2S"/>
</dbReference>
<dbReference type="InterPro" id="IPR036922">
    <property type="entry name" value="Rieske_2Fe-2S_sf"/>
</dbReference>
<dbReference type="InterPro" id="IPR014349">
    <property type="entry name" value="Rieske_Fe-S_prot"/>
</dbReference>
<dbReference type="InterPro" id="IPR005805">
    <property type="entry name" value="Rieske_Fe-S_prot_C"/>
</dbReference>
<dbReference type="InterPro" id="IPR006311">
    <property type="entry name" value="TAT_signal"/>
</dbReference>
<dbReference type="NCBIfam" id="NF045928">
    <property type="entry name" value="Cytb6fFeSPetC"/>
    <property type="match status" value="1"/>
</dbReference>
<dbReference type="NCBIfam" id="NF010001">
    <property type="entry name" value="PRK13474.1"/>
    <property type="match status" value="1"/>
</dbReference>
<dbReference type="PANTHER" id="PTHR10134">
    <property type="entry name" value="CYTOCHROME B-C1 COMPLEX SUBUNIT RIESKE, MITOCHONDRIAL"/>
    <property type="match status" value="1"/>
</dbReference>
<dbReference type="Pfam" id="PF00355">
    <property type="entry name" value="Rieske"/>
    <property type="match status" value="1"/>
</dbReference>
<dbReference type="Pfam" id="PF25471">
    <property type="entry name" value="TM_PetC"/>
    <property type="match status" value="1"/>
</dbReference>
<dbReference type="PRINTS" id="PR00162">
    <property type="entry name" value="RIESKE"/>
</dbReference>
<dbReference type="SUPFAM" id="SSF50022">
    <property type="entry name" value="ISP domain"/>
    <property type="match status" value="1"/>
</dbReference>
<dbReference type="PROSITE" id="PS51296">
    <property type="entry name" value="RIESKE"/>
    <property type="match status" value="1"/>
</dbReference>
<dbReference type="PROSITE" id="PS51318">
    <property type="entry name" value="TAT"/>
    <property type="match status" value="1"/>
</dbReference>